<keyword id="KW-0131">Cell cycle</keyword>
<keyword id="KW-0132">Cell division</keyword>
<keyword id="KW-0159">Chromosome partition</keyword>
<keyword id="KW-0963">Cytoplasm</keyword>
<proteinExistence type="inferred from homology"/>
<gene>
    <name evidence="1" type="primary">scpA</name>
    <name type="ordered locus">SPH_1992</name>
</gene>
<sequence length="242" mass="28270">MDIKLKDFEGPLDLLLHLVSKYQMDIYDVPITEVIEQYLAYVSTLQAMRLEVTGEYMVMASQLMLIKSRKLLPKVAEVTDLGDDLEQDLLSQIEEYRKFKLLGEHLEAKHQERAQYYSKAPTELIYEDAELVHDKTTIDLFLAFSNILAKKKEEFAQNHTTILRDEYKIEDMMIIVKESLIGRDQLRLQDLFKEAQNVQEVITLFLATLELIKTQELILVQEESFGDIYLMEKKEESQVPQS</sequence>
<comment type="function">
    <text evidence="1">Participates in chromosomal partition during cell division. May act via the formation of a condensin-like complex containing Smc and ScpB that pull DNA away from mid-cell into both cell halves.</text>
</comment>
<comment type="subunit">
    <text evidence="1">Component of a cohesin-like complex composed of ScpA, ScpB and the Smc homodimer, in which ScpA and ScpB bind to the head domain of Smc. The presence of the three proteins is required for the association of the complex with DNA.</text>
</comment>
<comment type="subcellular location">
    <subcellularLocation>
        <location evidence="1">Cytoplasm</location>
    </subcellularLocation>
    <text evidence="1">Associated with two foci at the outer edges of the nucleoid region in young cells, and at four foci within both cell halves in older cells.</text>
</comment>
<comment type="similarity">
    <text evidence="1">Belongs to the ScpA family.</text>
</comment>
<protein>
    <recommendedName>
        <fullName evidence="1">Segregation and condensation protein A</fullName>
    </recommendedName>
</protein>
<accession>B1I886</accession>
<organism>
    <name type="scientific">Streptococcus pneumoniae (strain Hungary19A-6)</name>
    <dbReference type="NCBI Taxonomy" id="487214"/>
    <lineage>
        <taxon>Bacteria</taxon>
        <taxon>Bacillati</taxon>
        <taxon>Bacillota</taxon>
        <taxon>Bacilli</taxon>
        <taxon>Lactobacillales</taxon>
        <taxon>Streptococcaceae</taxon>
        <taxon>Streptococcus</taxon>
    </lineage>
</organism>
<dbReference type="EMBL" id="CP000936">
    <property type="protein sequence ID" value="ACA37534.1"/>
    <property type="molecule type" value="Genomic_DNA"/>
</dbReference>
<dbReference type="RefSeq" id="WP_000351907.1">
    <property type="nucleotide sequence ID" value="NC_010380.1"/>
</dbReference>
<dbReference type="SMR" id="B1I886"/>
<dbReference type="KEGG" id="spv:SPH_1992"/>
<dbReference type="HOGENOM" id="CLU_038686_3_3_9"/>
<dbReference type="Proteomes" id="UP000002163">
    <property type="component" value="Chromosome"/>
</dbReference>
<dbReference type="GO" id="GO:0005737">
    <property type="term" value="C:cytoplasm"/>
    <property type="evidence" value="ECO:0007669"/>
    <property type="project" value="UniProtKB-SubCell"/>
</dbReference>
<dbReference type="GO" id="GO:0051301">
    <property type="term" value="P:cell division"/>
    <property type="evidence" value="ECO:0007669"/>
    <property type="project" value="UniProtKB-KW"/>
</dbReference>
<dbReference type="GO" id="GO:0007059">
    <property type="term" value="P:chromosome segregation"/>
    <property type="evidence" value="ECO:0007669"/>
    <property type="project" value="UniProtKB-UniRule"/>
</dbReference>
<dbReference type="GO" id="GO:0006260">
    <property type="term" value="P:DNA replication"/>
    <property type="evidence" value="ECO:0007669"/>
    <property type="project" value="UniProtKB-UniRule"/>
</dbReference>
<dbReference type="Gene3D" id="6.10.250.2410">
    <property type="match status" value="1"/>
</dbReference>
<dbReference type="Gene3D" id="1.10.10.580">
    <property type="entry name" value="Structural maintenance of chromosome 1. Chain E"/>
    <property type="match status" value="1"/>
</dbReference>
<dbReference type="HAMAP" id="MF_01805">
    <property type="entry name" value="ScpA"/>
    <property type="match status" value="1"/>
</dbReference>
<dbReference type="InterPro" id="IPR003768">
    <property type="entry name" value="ScpA"/>
</dbReference>
<dbReference type="InterPro" id="IPR023093">
    <property type="entry name" value="ScpA-like_C"/>
</dbReference>
<dbReference type="NCBIfam" id="NF000993">
    <property type="entry name" value="PRK00104.1-2"/>
    <property type="match status" value="1"/>
</dbReference>
<dbReference type="PANTHER" id="PTHR33969">
    <property type="entry name" value="SEGREGATION AND CONDENSATION PROTEIN A"/>
    <property type="match status" value="1"/>
</dbReference>
<dbReference type="PANTHER" id="PTHR33969:SF2">
    <property type="entry name" value="SEGREGATION AND CONDENSATION PROTEIN A"/>
    <property type="match status" value="1"/>
</dbReference>
<dbReference type="Pfam" id="PF02616">
    <property type="entry name" value="SMC_ScpA"/>
    <property type="match status" value="1"/>
</dbReference>
<name>SCPA_STRPI</name>
<reference key="1">
    <citation type="journal article" date="2010" name="Genome Biol.">
        <title>Structure and dynamics of the pan-genome of Streptococcus pneumoniae and closely related species.</title>
        <authorList>
            <person name="Donati C."/>
            <person name="Hiller N.L."/>
            <person name="Tettelin H."/>
            <person name="Muzzi A."/>
            <person name="Croucher N.J."/>
            <person name="Angiuoli S.V."/>
            <person name="Oggioni M."/>
            <person name="Dunning Hotopp J.C."/>
            <person name="Hu F.Z."/>
            <person name="Riley D.R."/>
            <person name="Covacci A."/>
            <person name="Mitchell T.J."/>
            <person name="Bentley S.D."/>
            <person name="Kilian M."/>
            <person name="Ehrlich G.D."/>
            <person name="Rappuoli R."/>
            <person name="Moxon E.R."/>
            <person name="Masignani V."/>
        </authorList>
    </citation>
    <scope>NUCLEOTIDE SEQUENCE [LARGE SCALE GENOMIC DNA]</scope>
    <source>
        <strain>Hungary19A-6</strain>
    </source>
</reference>
<feature type="chain" id="PRO_1000187571" description="Segregation and condensation protein A">
    <location>
        <begin position="1"/>
        <end position="242"/>
    </location>
</feature>
<evidence type="ECO:0000255" key="1">
    <source>
        <dbReference type="HAMAP-Rule" id="MF_01805"/>
    </source>
</evidence>